<evidence type="ECO:0000255" key="1">
    <source>
        <dbReference type="HAMAP-Rule" id="MF_00407"/>
    </source>
</evidence>
<evidence type="ECO:0000305" key="2"/>
<accession>B2HHE1</accession>
<proteinExistence type="inferred from homology"/>
<protein>
    <recommendedName>
        <fullName evidence="1">Probable DNA ligase</fullName>
        <ecNumber evidence="1">6.5.1.1</ecNumber>
    </recommendedName>
    <alternativeName>
        <fullName evidence="1">Polydeoxyribonucleotide synthase [ATP]</fullName>
    </alternativeName>
</protein>
<feature type="chain" id="PRO_0000365225" description="Probable DNA ligase">
    <location>
        <begin position="1"/>
        <end position="513"/>
    </location>
</feature>
<feature type="active site" description="N6-AMP-lysine intermediate" evidence="1">
    <location>
        <position position="217"/>
    </location>
</feature>
<feature type="binding site" evidence="1">
    <location>
        <position position="215"/>
    </location>
    <ligand>
        <name>ATP</name>
        <dbReference type="ChEBI" id="CHEBI:30616"/>
    </ligand>
</feature>
<feature type="binding site" evidence="1">
    <location>
        <position position="222"/>
    </location>
    <ligand>
        <name>ATP</name>
        <dbReference type="ChEBI" id="CHEBI:30616"/>
    </ligand>
</feature>
<feature type="binding site" evidence="1">
    <location>
        <position position="237"/>
    </location>
    <ligand>
        <name>ATP</name>
        <dbReference type="ChEBI" id="CHEBI:30616"/>
    </ligand>
</feature>
<feature type="binding site" evidence="1">
    <location>
        <position position="266"/>
    </location>
    <ligand>
        <name>ATP</name>
        <dbReference type="ChEBI" id="CHEBI:30616"/>
    </ligand>
</feature>
<feature type="binding site" evidence="1">
    <location>
        <position position="306"/>
    </location>
    <ligand>
        <name>ATP</name>
        <dbReference type="ChEBI" id="CHEBI:30616"/>
    </ligand>
</feature>
<feature type="binding site" evidence="1">
    <location>
        <position position="378"/>
    </location>
    <ligand>
        <name>ATP</name>
        <dbReference type="ChEBI" id="CHEBI:30616"/>
    </ligand>
</feature>
<feature type="binding site" evidence="1">
    <location>
        <position position="384"/>
    </location>
    <ligand>
        <name>ATP</name>
        <dbReference type="ChEBI" id="CHEBI:30616"/>
    </ligand>
</feature>
<keyword id="KW-0067">ATP-binding</keyword>
<keyword id="KW-0131">Cell cycle</keyword>
<keyword id="KW-0132">Cell division</keyword>
<keyword id="KW-0227">DNA damage</keyword>
<keyword id="KW-0233">DNA recombination</keyword>
<keyword id="KW-0234">DNA repair</keyword>
<keyword id="KW-0235">DNA replication</keyword>
<keyword id="KW-0436">Ligase</keyword>
<keyword id="KW-0460">Magnesium</keyword>
<keyword id="KW-0479">Metal-binding</keyword>
<keyword id="KW-0547">Nucleotide-binding</keyword>
<keyword id="KW-1185">Reference proteome</keyword>
<sequence length="513" mass="53785">MLLIDIASTSLNVGGTSSRLAKVERIAELLRAAAPDPELVAIVVAWLSGELRQRQIGVGWAALRSLPAAAGSPALTVTGTDAAFSEIGAVSGKGSAARRRELITRLFAAATETEQAFLVRLLSGELRQGALAGIMVDAVARAAEVPATAVQRAAMLGGDLPTVAAACLAAGSSGAAGALDSFTLRVGRPIGPMLAQSAGSITVALERHGGATIFEAKLDGARVQIHRTGDEVTVYTRSLDDVTARLPEVVQATLALPVSDLVADGEAIALQPDGRPHRFQVTASRFGRSVNVAAAQAKQPLSVFFFDILHRDGRDLLDAPTTDRLAALDAVVPARHRVDRLTTADAAAATDFLRATLAAGHEGVMAKSPTAPYLAGRRGAGWLKVKPVHTLDLVVLAVEWGSGRRRGKLSNIHLGARDAATGEFVMLGKTFKGMTDAMLDWQTARFTELAVGGTDGYVVALRPEQVVEVAFDGVQASSRYPGGLALRFARVVRYRDDKGPADADTIDTVRALY</sequence>
<gene>
    <name evidence="1" type="primary">lig</name>
    <name type="ordered locus">MMAR_1623</name>
</gene>
<dbReference type="EC" id="6.5.1.1" evidence="1"/>
<dbReference type="EMBL" id="CP000854">
    <property type="protein sequence ID" value="ACC40073.1"/>
    <property type="status" value="ALT_INIT"/>
    <property type="molecule type" value="Genomic_DNA"/>
</dbReference>
<dbReference type="RefSeq" id="WP_041324509.1">
    <property type="nucleotide sequence ID" value="NC_010612.1"/>
</dbReference>
<dbReference type="SMR" id="B2HHE1"/>
<dbReference type="STRING" id="216594.MMAR_1623"/>
<dbReference type="KEGG" id="mmi:MMAR_1623"/>
<dbReference type="eggNOG" id="COG1793">
    <property type="taxonomic scope" value="Bacteria"/>
</dbReference>
<dbReference type="HOGENOM" id="CLU_005138_6_1_11"/>
<dbReference type="OrthoDB" id="3733803at2"/>
<dbReference type="Proteomes" id="UP000001190">
    <property type="component" value="Chromosome"/>
</dbReference>
<dbReference type="GO" id="GO:0005524">
    <property type="term" value="F:ATP binding"/>
    <property type="evidence" value="ECO:0007669"/>
    <property type="project" value="UniProtKB-UniRule"/>
</dbReference>
<dbReference type="GO" id="GO:0003677">
    <property type="term" value="F:DNA binding"/>
    <property type="evidence" value="ECO:0007669"/>
    <property type="project" value="InterPro"/>
</dbReference>
<dbReference type="GO" id="GO:0003910">
    <property type="term" value="F:DNA ligase (ATP) activity"/>
    <property type="evidence" value="ECO:0007669"/>
    <property type="project" value="UniProtKB-UniRule"/>
</dbReference>
<dbReference type="GO" id="GO:0046872">
    <property type="term" value="F:metal ion binding"/>
    <property type="evidence" value="ECO:0007669"/>
    <property type="project" value="UniProtKB-KW"/>
</dbReference>
<dbReference type="GO" id="GO:0051301">
    <property type="term" value="P:cell division"/>
    <property type="evidence" value="ECO:0007669"/>
    <property type="project" value="UniProtKB-KW"/>
</dbReference>
<dbReference type="GO" id="GO:0071897">
    <property type="term" value="P:DNA biosynthetic process"/>
    <property type="evidence" value="ECO:0007669"/>
    <property type="project" value="InterPro"/>
</dbReference>
<dbReference type="GO" id="GO:0006310">
    <property type="term" value="P:DNA recombination"/>
    <property type="evidence" value="ECO:0007669"/>
    <property type="project" value="UniProtKB-UniRule"/>
</dbReference>
<dbReference type="GO" id="GO:0006281">
    <property type="term" value="P:DNA repair"/>
    <property type="evidence" value="ECO:0007669"/>
    <property type="project" value="UniProtKB-UniRule"/>
</dbReference>
<dbReference type="GO" id="GO:0006260">
    <property type="term" value="P:DNA replication"/>
    <property type="evidence" value="ECO:0007669"/>
    <property type="project" value="UniProtKB-UniRule"/>
</dbReference>
<dbReference type="CDD" id="cd07901">
    <property type="entry name" value="Adenylation_DNA_ligase_Arch_LigB"/>
    <property type="match status" value="1"/>
</dbReference>
<dbReference type="CDD" id="cd07972">
    <property type="entry name" value="OBF_DNA_ligase_Arch_LigB"/>
    <property type="match status" value="1"/>
</dbReference>
<dbReference type="FunFam" id="2.40.50.140:FF:000163">
    <property type="entry name" value="Probable DNA ligase"/>
    <property type="match status" value="1"/>
</dbReference>
<dbReference type="FunFam" id="3.30.470.30:FF:000012">
    <property type="entry name" value="Probable DNA ligase"/>
    <property type="match status" value="1"/>
</dbReference>
<dbReference type="Gene3D" id="1.10.3260.10">
    <property type="entry name" value="DNA ligase, ATP-dependent, N-terminal domain"/>
    <property type="match status" value="1"/>
</dbReference>
<dbReference type="Gene3D" id="3.30.470.30">
    <property type="entry name" value="DNA ligase/mRNA capping enzyme"/>
    <property type="match status" value="1"/>
</dbReference>
<dbReference type="Gene3D" id="2.40.50.140">
    <property type="entry name" value="Nucleic acid-binding proteins"/>
    <property type="match status" value="1"/>
</dbReference>
<dbReference type="HAMAP" id="MF_00407">
    <property type="entry name" value="DNA_ligase"/>
    <property type="match status" value="1"/>
</dbReference>
<dbReference type="InterPro" id="IPR050191">
    <property type="entry name" value="ATP-dep_DNA_ligase"/>
</dbReference>
<dbReference type="InterPro" id="IPR022865">
    <property type="entry name" value="DNA_ligae_ATP-dep_bac/arc"/>
</dbReference>
<dbReference type="InterPro" id="IPR000977">
    <property type="entry name" value="DNA_ligase_ATP-dep"/>
</dbReference>
<dbReference type="InterPro" id="IPR012309">
    <property type="entry name" value="DNA_ligase_ATP-dep_C"/>
</dbReference>
<dbReference type="InterPro" id="IPR012310">
    <property type="entry name" value="DNA_ligase_ATP-dep_cent"/>
</dbReference>
<dbReference type="InterPro" id="IPR016059">
    <property type="entry name" value="DNA_ligase_ATP-dep_CS"/>
</dbReference>
<dbReference type="InterPro" id="IPR012308">
    <property type="entry name" value="DNA_ligase_ATP-dep_N"/>
</dbReference>
<dbReference type="InterPro" id="IPR036599">
    <property type="entry name" value="DNA_ligase_N_sf"/>
</dbReference>
<dbReference type="InterPro" id="IPR012340">
    <property type="entry name" value="NA-bd_OB-fold"/>
</dbReference>
<dbReference type="NCBIfam" id="TIGR00574">
    <property type="entry name" value="dnl1"/>
    <property type="match status" value="1"/>
</dbReference>
<dbReference type="NCBIfam" id="NF002868">
    <property type="entry name" value="PRK03180.1"/>
    <property type="match status" value="1"/>
</dbReference>
<dbReference type="PANTHER" id="PTHR45674">
    <property type="entry name" value="DNA LIGASE 1/3 FAMILY MEMBER"/>
    <property type="match status" value="1"/>
</dbReference>
<dbReference type="PANTHER" id="PTHR45674:SF13">
    <property type="entry name" value="DNA LIGASE-RELATED"/>
    <property type="match status" value="1"/>
</dbReference>
<dbReference type="Pfam" id="PF04679">
    <property type="entry name" value="DNA_ligase_A_C"/>
    <property type="match status" value="1"/>
</dbReference>
<dbReference type="Pfam" id="PF01068">
    <property type="entry name" value="DNA_ligase_A_M"/>
    <property type="match status" value="1"/>
</dbReference>
<dbReference type="Pfam" id="PF04675">
    <property type="entry name" value="DNA_ligase_A_N"/>
    <property type="match status" value="1"/>
</dbReference>
<dbReference type="SUPFAM" id="SSF117018">
    <property type="entry name" value="ATP-dependent DNA ligase DNA-binding domain"/>
    <property type="match status" value="1"/>
</dbReference>
<dbReference type="SUPFAM" id="SSF56091">
    <property type="entry name" value="DNA ligase/mRNA capping enzyme, catalytic domain"/>
    <property type="match status" value="1"/>
</dbReference>
<dbReference type="SUPFAM" id="SSF50249">
    <property type="entry name" value="Nucleic acid-binding proteins"/>
    <property type="match status" value="1"/>
</dbReference>
<dbReference type="PROSITE" id="PS00697">
    <property type="entry name" value="DNA_LIGASE_A1"/>
    <property type="match status" value="1"/>
</dbReference>
<dbReference type="PROSITE" id="PS50160">
    <property type="entry name" value="DNA_LIGASE_A3"/>
    <property type="match status" value="1"/>
</dbReference>
<name>DNLI_MYCMM</name>
<comment type="function">
    <text evidence="1">DNA ligase that seals nicks in double-stranded DNA during DNA replication, DNA recombination and DNA repair.</text>
</comment>
<comment type="catalytic activity">
    <reaction evidence="1">
        <text>ATP + (deoxyribonucleotide)n-3'-hydroxyl + 5'-phospho-(deoxyribonucleotide)m = (deoxyribonucleotide)n+m + AMP + diphosphate.</text>
        <dbReference type="EC" id="6.5.1.1"/>
    </reaction>
</comment>
<comment type="cofactor">
    <cofactor evidence="1">
        <name>Mg(2+)</name>
        <dbReference type="ChEBI" id="CHEBI:18420"/>
    </cofactor>
</comment>
<comment type="similarity">
    <text evidence="1">Belongs to the ATP-dependent DNA ligase family.</text>
</comment>
<comment type="sequence caution" evidence="2">
    <conflict type="erroneous initiation">
        <sequence resource="EMBL-CDS" id="ACC40073"/>
    </conflict>
</comment>
<organism>
    <name type="scientific">Mycobacterium marinum (strain ATCC BAA-535 / M)</name>
    <dbReference type="NCBI Taxonomy" id="216594"/>
    <lineage>
        <taxon>Bacteria</taxon>
        <taxon>Bacillati</taxon>
        <taxon>Actinomycetota</taxon>
        <taxon>Actinomycetes</taxon>
        <taxon>Mycobacteriales</taxon>
        <taxon>Mycobacteriaceae</taxon>
        <taxon>Mycobacterium</taxon>
        <taxon>Mycobacterium ulcerans group</taxon>
    </lineage>
</organism>
<reference key="1">
    <citation type="journal article" date="2008" name="Genome Res.">
        <title>Insights from the complete genome sequence of Mycobacterium marinum on the evolution of Mycobacterium tuberculosis.</title>
        <authorList>
            <person name="Stinear T.P."/>
            <person name="Seemann T."/>
            <person name="Harrison P.F."/>
            <person name="Jenkin G.A."/>
            <person name="Davies J.K."/>
            <person name="Johnson P.D."/>
            <person name="Abdellah Z."/>
            <person name="Arrowsmith C."/>
            <person name="Chillingworth T."/>
            <person name="Churcher C."/>
            <person name="Clarke K."/>
            <person name="Cronin A."/>
            <person name="Davis P."/>
            <person name="Goodhead I."/>
            <person name="Holroyd N."/>
            <person name="Jagels K."/>
            <person name="Lord A."/>
            <person name="Moule S."/>
            <person name="Mungall K."/>
            <person name="Norbertczak H."/>
            <person name="Quail M.A."/>
            <person name="Rabbinowitsch E."/>
            <person name="Walker D."/>
            <person name="White B."/>
            <person name="Whitehead S."/>
            <person name="Small P.L."/>
            <person name="Brosch R."/>
            <person name="Ramakrishnan L."/>
            <person name="Fischbach M.A."/>
            <person name="Parkhill J."/>
            <person name="Cole S.T."/>
        </authorList>
    </citation>
    <scope>NUCLEOTIDE SEQUENCE [LARGE SCALE GENOMIC DNA]</scope>
    <source>
        <strain>ATCC BAA-535 / M</strain>
    </source>
</reference>